<organism>
    <name type="scientific">Pseudoalteromonas translucida (strain TAC 125)</name>
    <dbReference type="NCBI Taxonomy" id="326442"/>
    <lineage>
        <taxon>Bacteria</taxon>
        <taxon>Pseudomonadati</taxon>
        <taxon>Pseudomonadota</taxon>
        <taxon>Gammaproteobacteria</taxon>
        <taxon>Alteromonadales</taxon>
        <taxon>Pseudoalteromonadaceae</taxon>
        <taxon>Pseudoalteromonas</taxon>
    </lineage>
</organism>
<protein>
    <recommendedName>
        <fullName evidence="1">Exodeoxyribonuclease 7 large subunit</fullName>
        <ecNumber evidence="1">3.1.11.6</ecNumber>
    </recommendedName>
    <alternativeName>
        <fullName evidence="1">Exodeoxyribonuclease VII large subunit</fullName>
        <shortName evidence="1">Exonuclease VII large subunit</shortName>
    </alternativeName>
</protein>
<proteinExistence type="inferred from homology"/>
<sequence length="444" mass="49614">MFSKPLQTIYTVSRLNREIRALLEQGFASLVLTGEISNFITPASGHWYFSLKDDKAQIKAAMWRGNNRNQSYRPINGAQVTVKARVSLYEPRGDYQLIVEHMEPAGEGQFKQEFDALKMRLAAEGLFSSVYKKPLPQNINRIGVITSATGAAIKDILTVLKRRAPQLEVIIYPAMVQGKDAHLQLIKQIELANIRSEVDVLILGRGGGSLEDLWCFNHEQLARAIFNSQLPIVSAVGHEIDTTISDYVADVRAATPSAAAELVSPNTQELHNKVTQLVNRLANAFKHDMSEKRAQALQLQHRLNLCHPRNQLNQKAQRLDELSIALQQAMRNSLYQQERTLNNLTPRLMRQSPDKKLTQASHQLAQLQTRLNQAIQQQLQQANNSLALQASRLDSVSPLNVLARGYSITKTDKQKVVKSVADVKVGDTLITELVDGTLHSQVLS</sequence>
<name>EX7L_PSET1</name>
<accession>Q3IHJ4</accession>
<comment type="function">
    <text evidence="1">Bidirectionally degrades single-stranded DNA into large acid-insoluble oligonucleotides, which are then degraded further into small acid-soluble oligonucleotides.</text>
</comment>
<comment type="catalytic activity">
    <reaction evidence="1">
        <text>Exonucleolytic cleavage in either 5'- to 3'- or 3'- to 5'-direction to yield nucleoside 5'-phosphates.</text>
        <dbReference type="EC" id="3.1.11.6"/>
    </reaction>
</comment>
<comment type="subunit">
    <text evidence="1">Heterooligomer composed of large and small subunits.</text>
</comment>
<comment type="subcellular location">
    <subcellularLocation>
        <location evidence="1">Cytoplasm</location>
    </subcellularLocation>
</comment>
<comment type="similarity">
    <text evidence="1">Belongs to the XseA family.</text>
</comment>
<keyword id="KW-0963">Cytoplasm</keyword>
<keyword id="KW-0269">Exonuclease</keyword>
<keyword id="KW-0378">Hydrolase</keyword>
<keyword id="KW-0540">Nuclease</keyword>
<keyword id="KW-1185">Reference proteome</keyword>
<feature type="chain" id="PRO_0000273675" description="Exodeoxyribonuclease 7 large subunit">
    <location>
        <begin position="1"/>
        <end position="444"/>
    </location>
</feature>
<reference key="1">
    <citation type="journal article" date="2005" name="Genome Res.">
        <title>Coping with cold: the genome of the versatile marine Antarctica bacterium Pseudoalteromonas haloplanktis TAC125.</title>
        <authorList>
            <person name="Medigue C."/>
            <person name="Krin E."/>
            <person name="Pascal G."/>
            <person name="Barbe V."/>
            <person name="Bernsel A."/>
            <person name="Bertin P.N."/>
            <person name="Cheung F."/>
            <person name="Cruveiller S."/>
            <person name="D'Amico S."/>
            <person name="Duilio A."/>
            <person name="Fang G."/>
            <person name="Feller G."/>
            <person name="Ho C."/>
            <person name="Mangenot S."/>
            <person name="Marino G."/>
            <person name="Nilsson J."/>
            <person name="Parrilli E."/>
            <person name="Rocha E.P.C."/>
            <person name="Rouy Z."/>
            <person name="Sekowska A."/>
            <person name="Tutino M.L."/>
            <person name="Vallenet D."/>
            <person name="von Heijne G."/>
            <person name="Danchin A."/>
        </authorList>
    </citation>
    <scope>NUCLEOTIDE SEQUENCE [LARGE SCALE GENOMIC DNA]</scope>
    <source>
        <strain>TAC 125</strain>
    </source>
</reference>
<gene>
    <name evidence="1" type="primary">xseA</name>
    <name type="ordered locus">PSHAa0647</name>
</gene>
<dbReference type="EC" id="3.1.11.6" evidence="1"/>
<dbReference type="EMBL" id="CR954246">
    <property type="protein sequence ID" value="CAI85732.1"/>
    <property type="molecule type" value="Genomic_DNA"/>
</dbReference>
<dbReference type="SMR" id="Q3IHJ4"/>
<dbReference type="STRING" id="326442.PSHAa0647"/>
<dbReference type="KEGG" id="pha:PSHAa0647"/>
<dbReference type="PATRIC" id="fig|326442.8.peg.611"/>
<dbReference type="eggNOG" id="COG1570">
    <property type="taxonomic scope" value="Bacteria"/>
</dbReference>
<dbReference type="HOGENOM" id="CLU_023625_3_1_6"/>
<dbReference type="BioCyc" id="PHAL326442:PSHA_RS03160-MONOMER"/>
<dbReference type="Proteomes" id="UP000006843">
    <property type="component" value="Chromosome I"/>
</dbReference>
<dbReference type="GO" id="GO:0005737">
    <property type="term" value="C:cytoplasm"/>
    <property type="evidence" value="ECO:0007669"/>
    <property type="project" value="UniProtKB-SubCell"/>
</dbReference>
<dbReference type="GO" id="GO:0009318">
    <property type="term" value="C:exodeoxyribonuclease VII complex"/>
    <property type="evidence" value="ECO:0007669"/>
    <property type="project" value="InterPro"/>
</dbReference>
<dbReference type="GO" id="GO:0008855">
    <property type="term" value="F:exodeoxyribonuclease VII activity"/>
    <property type="evidence" value="ECO:0007669"/>
    <property type="project" value="UniProtKB-UniRule"/>
</dbReference>
<dbReference type="GO" id="GO:0003676">
    <property type="term" value="F:nucleic acid binding"/>
    <property type="evidence" value="ECO:0007669"/>
    <property type="project" value="InterPro"/>
</dbReference>
<dbReference type="GO" id="GO:0006308">
    <property type="term" value="P:DNA catabolic process"/>
    <property type="evidence" value="ECO:0007669"/>
    <property type="project" value="UniProtKB-UniRule"/>
</dbReference>
<dbReference type="CDD" id="cd04489">
    <property type="entry name" value="ExoVII_LU_OBF"/>
    <property type="match status" value="1"/>
</dbReference>
<dbReference type="HAMAP" id="MF_00378">
    <property type="entry name" value="Exonuc_7_L"/>
    <property type="match status" value="1"/>
</dbReference>
<dbReference type="InterPro" id="IPR003753">
    <property type="entry name" value="Exonuc_VII_L"/>
</dbReference>
<dbReference type="InterPro" id="IPR020579">
    <property type="entry name" value="Exonuc_VII_lsu_C"/>
</dbReference>
<dbReference type="InterPro" id="IPR025824">
    <property type="entry name" value="OB-fold_nuc-bd_dom"/>
</dbReference>
<dbReference type="NCBIfam" id="TIGR00237">
    <property type="entry name" value="xseA"/>
    <property type="match status" value="1"/>
</dbReference>
<dbReference type="PANTHER" id="PTHR30008">
    <property type="entry name" value="EXODEOXYRIBONUCLEASE 7 LARGE SUBUNIT"/>
    <property type="match status" value="1"/>
</dbReference>
<dbReference type="PANTHER" id="PTHR30008:SF0">
    <property type="entry name" value="EXODEOXYRIBONUCLEASE 7 LARGE SUBUNIT"/>
    <property type="match status" value="1"/>
</dbReference>
<dbReference type="Pfam" id="PF02601">
    <property type="entry name" value="Exonuc_VII_L"/>
    <property type="match status" value="1"/>
</dbReference>
<dbReference type="Pfam" id="PF13742">
    <property type="entry name" value="tRNA_anti_2"/>
    <property type="match status" value="1"/>
</dbReference>
<evidence type="ECO:0000255" key="1">
    <source>
        <dbReference type="HAMAP-Rule" id="MF_00378"/>
    </source>
</evidence>